<organism>
    <name type="scientific">Arthrobacter sp. (strain FB24)</name>
    <dbReference type="NCBI Taxonomy" id="290399"/>
    <lineage>
        <taxon>Bacteria</taxon>
        <taxon>Bacillati</taxon>
        <taxon>Actinomycetota</taxon>
        <taxon>Actinomycetes</taxon>
        <taxon>Micrococcales</taxon>
        <taxon>Micrococcaceae</taxon>
        <taxon>Arthrobacter</taxon>
    </lineage>
</organism>
<reference key="1">
    <citation type="journal article" date="2013" name="Stand. Genomic Sci.">
        <title>Complete genome sequence of Arthrobacter sp. strain FB24.</title>
        <authorList>
            <person name="Nakatsu C.H."/>
            <person name="Barabote R."/>
            <person name="Thompson S."/>
            <person name="Bruce D."/>
            <person name="Detter C."/>
            <person name="Brettin T."/>
            <person name="Han C."/>
            <person name="Beasley F."/>
            <person name="Chen W."/>
            <person name="Konopka A."/>
            <person name="Xie G."/>
        </authorList>
    </citation>
    <scope>NUCLEOTIDE SEQUENCE [LARGE SCALE GENOMIC DNA]</scope>
    <source>
        <strain>FB24</strain>
    </source>
</reference>
<dbReference type="EC" id="3.5.4.19" evidence="1"/>
<dbReference type="EMBL" id="CP000454">
    <property type="protein sequence ID" value="ABK03077.1"/>
    <property type="molecule type" value="Genomic_DNA"/>
</dbReference>
<dbReference type="RefSeq" id="WP_011691543.1">
    <property type="nucleotide sequence ID" value="NC_008541.1"/>
</dbReference>
<dbReference type="SMR" id="A0JVK7"/>
<dbReference type="STRING" id="290399.Arth_1683"/>
<dbReference type="KEGG" id="art:Arth_1683"/>
<dbReference type="eggNOG" id="COG0139">
    <property type="taxonomic scope" value="Bacteria"/>
</dbReference>
<dbReference type="HOGENOM" id="CLU_048577_5_1_11"/>
<dbReference type="OrthoDB" id="9795769at2"/>
<dbReference type="UniPathway" id="UPA00031">
    <property type="reaction ID" value="UER00008"/>
</dbReference>
<dbReference type="Proteomes" id="UP000000754">
    <property type="component" value="Chromosome"/>
</dbReference>
<dbReference type="GO" id="GO:0005737">
    <property type="term" value="C:cytoplasm"/>
    <property type="evidence" value="ECO:0007669"/>
    <property type="project" value="UniProtKB-SubCell"/>
</dbReference>
<dbReference type="GO" id="GO:0000287">
    <property type="term" value="F:magnesium ion binding"/>
    <property type="evidence" value="ECO:0007669"/>
    <property type="project" value="UniProtKB-UniRule"/>
</dbReference>
<dbReference type="GO" id="GO:0004635">
    <property type="term" value="F:phosphoribosyl-AMP cyclohydrolase activity"/>
    <property type="evidence" value="ECO:0007669"/>
    <property type="project" value="UniProtKB-UniRule"/>
</dbReference>
<dbReference type="GO" id="GO:0008270">
    <property type="term" value="F:zinc ion binding"/>
    <property type="evidence" value="ECO:0007669"/>
    <property type="project" value="UniProtKB-UniRule"/>
</dbReference>
<dbReference type="GO" id="GO:0000105">
    <property type="term" value="P:L-histidine biosynthetic process"/>
    <property type="evidence" value="ECO:0007669"/>
    <property type="project" value="UniProtKB-UniRule"/>
</dbReference>
<dbReference type="FunFam" id="3.10.20.810:FF:000001">
    <property type="entry name" value="Histidine biosynthesis bifunctional protein HisIE"/>
    <property type="match status" value="1"/>
</dbReference>
<dbReference type="Gene3D" id="3.10.20.810">
    <property type="entry name" value="Phosphoribosyl-AMP cyclohydrolase"/>
    <property type="match status" value="1"/>
</dbReference>
<dbReference type="HAMAP" id="MF_01021">
    <property type="entry name" value="HisI"/>
    <property type="match status" value="1"/>
</dbReference>
<dbReference type="InterPro" id="IPR026660">
    <property type="entry name" value="PRA-CH"/>
</dbReference>
<dbReference type="InterPro" id="IPR002496">
    <property type="entry name" value="PRib_AMP_CycHydrolase_dom"/>
</dbReference>
<dbReference type="InterPro" id="IPR038019">
    <property type="entry name" value="PRib_AMP_CycHydrolase_sf"/>
</dbReference>
<dbReference type="NCBIfam" id="NF000768">
    <property type="entry name" value="PRK00051.1"/>
    <property type="match status" value="1"/>
</dbReference>
<dbReference type="PANTHER" id="PTHR42945">
    <property type="entry name" value="HISTIDINE BIOSYNTHESIS BIFUNCTIONAL PROTEIN"/>
    <property type="match status" value="1"/>
</dbReference>
<dbReference type="PANTHER" id="PTHR42945:SF11">
    <property type="entry name" value="PHOSPHORIBOSYL-AMP CYCLOHYDROLASE"/>
    <property type="match status" value="1"/>
</dbReference>
<dbReference type="Pfam" id="PF01502">
    <property type="entry name" value="PRA-CH"/>
    <property type="match status" value="1"/>
</dbReference>
<dbReference type="SUPFAM" id="SSF141734">
    <property type="entry name" value="HisI-like"/>
    <property type="match status" value="1"/>
</dbReference>
<name>HIS3_ARTS2</name>
<comment type="function">
    <text evidence="1">Catalyzes the hydrolysis of the adenine ring of phosphoribosyl-AMP.</text>
</comment>
<comment type="catalytic activity">
    <reaction evidence="1">
        <text>1-(5-phospho-beta-D-ribosyl)-5'-AMP + H2O = 1-(5-phospho-beta-D-ribosyl)-5-[(5-phospho-beta-D-ribosylamino)methylideneamino]imidazole-4-carboxamide</text>
        <dbReference type="Rhea" id="RHEA:20049"/>
        <dbReference type="ChEBI" id="CHEBI:15377"/>
        <dbReference type="ChEBI" id="CHEBI:58435"/>
        <dbReference type="ChEBI" id="CHEBI:59457"/>
        <dbReference type="EC" id="3.5.4.19"/>
    </reaction>
</comment>
<comment type="cofactor">
    <cofactor evidence="1">
        <name>Mg(2+)</name>
        <dbReference type="ChEBI" id="CHEBI:18420"/>
    </cofactor>
    <text evidence="1">Binds 1 Mg(2+) ion per subunit.</text>
</comment>
<comment type="cofactor">
    <cofactor evidence="1">
        <name>Zn(2+)</name>
        <dbReference type="ChEBI" id="CHEBI:29105"/>
    </cofactor>
    <text evidence="1">Binds 1 zinc ion per subunit.</text>
</comment>
<comment type="pathway">
    <text evidence="1">Amino-acid biosynthesis; L-histidine biosynthesis; L-histidine from 5-phospho-alpha-D-ribose 1-diphosphate: step 3/9.</text>
</comment>
<comment type="subunit">
    <text evidence="1">Homodimer.</text>
</comment>
<comment type="subcellular location">
    <subcellularLocation>
        <location evidence="1">Cytoplasm</location>
    </subcellularLocation>
</comment>
<comment type="similarity">
    <text evidence="1">Belongs to the PRA-CH family.</text>
</comment>
<gene>
    <name evidence="1" type="primary">hisI</name>
    <name type="ordered locus">Arth_1683</name>
</gene>
<protein>
    <recommendedName>
        <fullName evidence="1">Phosphoribosyl-AMP cyclohydrolase</fullName>
        <shortName evidence="1">PRA-CH</shortName>
        <ecNumber evidence="1">3.5.4.19</ecNumber>
    </recommendedName>
</protein>
<evidence type="ECO:0000255" key="1">
    <source>
        <dbReference type="HAMAP-Rule" id="MF_01021"/>
    </source>
</evidence>
<accession>A0JVK7</accession>
<proteinExistence type="inferred from homology"/>
<keyword id="KW-0028">Amino-acid biosynthesis</keyword>
<keyword id="KW-0963">Cytoplasm</keyword>
<keyword id="KW-0368">Histidine biosynthesis</keyword>
<keyword id="KW-0378">Hydrolase</keyword>
<keyword id="KW-0460">Magnesium</keyword>
<keyword id="KW-0479">Metal-binding</keyword>
<keyword id="KW-1185">Reference proteome</keyword>
<keyword id="KW-0862">Zinc</keyword>
<feature type="chain" id="PRO_1000063387" description="Phosphoribosyl-AMP cyclohydrolase">
    <location>
        <begin position="1"/>
        <end position="134"/>
    </location>
</feature>
<feature type="binding site" evidence="1">
    <location>
        <position position="90"/>
    </location>
    <ligand>
        <name>Mg(2+)</name>
        <dbReference type="ChEBI" id="CHEBI:18420"/>
    </ligand>
</feature>
<feature type="binding site" evidence="1">
    <location>
        <position position="91"/>
    </location>
    <ligand>
        <name>Zn(2+)</name>
        <dbReference type="ChEBI" id="CHEBI:29105"/>
        <note>ligand shared between dimeric partners</note>
    </ligand>
</feature>
<feature type="binding site" evidence="1">
    <location>
        <position position="92"/>
    </location>
    <ligand>
        <name>Mg(2+)</name>
        <dbReference type="ChEBI" id="CHEBI:18420"/>
    </ligand>
</feature>
<feature type="binding site" evidence="1">
    <location>
        <position position="94"/>
    </location>
    <ligand>
        <name>Mg(2+)</name>
        <dbReference type="ChEBI" id="CHEBI:18420"/>
    </ligand>
</feature>
<feature type="binding site" evidence="1">
    <location>
        <position position="107"/>
    </location>
    <ligand>
        <name>Zn(2+)</name>
        <dbReference type="ChEBI" id="CHEBI:29105"/>
        <note>ligand shared between dimeric partners</note>
    </ligand>
</feature>
<feature type="binding site" evidence="1">
    <location>
        <position position="114"/>
    </location>
    <ligand>
        <name>Zn(2+)</name>
        <dbReference type="ChEBI" id="CHEBI:29105"/>
        <note>ligand shared between dimeric partners</note>
    </ligand>
</feature>
<sequence>MSEQPAPAPVPVLPAEVADALKRDAAGLVAAVVQQFDTNEVLMLGWMDDEALRRTMTSGRVTFYSRSRQEYWRKGDTSGHVQWVKSVALDCDGDALLVRVDQVGAACHTGTRTCFDGRGLPVVAGDAGAAGNAS</sequence>